<feature type="chain" id="PRO_0000241872" description="Orotidine 5'-phosphate decarboxylase">
    <location>
        <begin position="1"/>
        <end position="229"/>
    </location>
</feature>
<feature type="active site" description="Proton donor" evidence="1">
    <location>
        <position position="61"/>
    </location>
</feature>
<feature type="binding site" evidence="1">
    <location>
        <position position="10"/>
    </location>
    <ligand>
        <name>substrate</name>
    </ligand>
</feature>
<feature type="binding site" evidence="1">
    <location>
        <position position="32"/>
    </location>
    <ligand>
        <name>substrate</name>
    </ligand>
</feature>
<feature type="binding site" evidence="1">
    <location>
        <begin position="59"/>
        <end position="68"/>
    </location>
    <ligand>
        <name>substrate</name>
    </ligand>
</feature>
<feature type="binding site" evidence="1">
    <location>
        <position position="119"/>
    </location>
    <ligand>
        <name>substrate</name>
    </ligand>
</feature>
<feature type="binding site" evidence="1">
    <location>
        <position position="180"/>
    </location>
    <ligand>
        <name>substrate</name>
    </ligand>
</feature>
<feature type="binding site" evidence="1">
    <location>
        <position position="189"/>
    </location>
    <ligand>
        <name>substrate</name>
    </ligand>
</feature>
<feature type="binding site" evidence="1">
    <location>
        <position position="209"/>
    </location>
    <ligand>
        <name>substrate</name>
    </ligand>
</feature>
<feature type="binding site" evidence="1">
    <location>
        <position position="210"/>
    </location>
    <ligand>
        <name>substrate</name>
    </ligand>
</feature>
<keyword id="KW-0210">Decarboxylase</keyword>
<keyword id="KW-0456">Lyase</keyword>
<keyword id="KW-0665">Pyrimidine biosynthesis</keyword>
<sequence length="229" mass="25123">MTPKLIVALDFDNQDNALQLVDKLDPNHCALKVGSELFTLLGPQFVKELVRREFKVFLDLKFHDIPNTVAKACHSAAELGVWMINVHAIGGLRMLQAARESLKTYGKDRPLLIAVTVLTSFEEGELASVGISNTLPEQATHLAMLAREAGLDGVVSSAHEVKIIKQKCGENFITVTPGIRLPNNLKDDQSRVMTPQQAIREGSDFLVIGRPITQASNPHEVVSALLRDL</sequence>
<protein>
    <recommendedName>
        <fullName evidence="1">Orotidine 5'-phosphate decarboxylase</fullName>
        <ecNumber evidence="1">4.1.1.23</ecNumber>
    </recommendedName>
    <alternativeName>
        <fullName evidence="1">OMP decarboxylase</fullName>
        <shortName evidence="1">OMPDCase</shortName>
        <shortName evidence="1">OMPdecase</shortName>
    </alternativeName>
</protein>
<name>PYRF_LEGPA</name>
<gene>
    <name evidence="1" type="primary">pyrF</name>
    <name type="ordered locus">lpp1380</name>
</gene>
<proteinExistence type="inferred from homology"/>
<organism>
    <name type="scientific">Legionella pneumophila (strain Paris)</name>
    <dbReference type="NCBI Taxonomy" id="297246"/>
    <lineage>
        <taxon>Bacteria</taxon>
        <taxon>Pseudomonadati</taxon>
        <taxon>Pseudomonadota</taxon>
        <taxon>Gammaproteobacteria</taxon>
        <taxon>Legionellales</taxon>
        <taxon>Legionellaceae</taxon>
        <taxon>Legionella</taxon>
    </lineage>
</organism>
<evidence type="ECO:0000255" key="1">
    <source>
        <dbReference type="HAMAP-Rule" id="MF_01200"/>
    </source>
</evidence>
<accession>Q5X5E0</accession>
<comment type="function">
    <text evidence="1">Catalyzes the decarboxylation of orotidine 5'-monophosphate (OMP) to uridine 5'-monophosphate (UMP).</text>
</comment>
<comment type="catalytic activity">
    <reaction evidence="1">
        <text>orotidine 5'-phosphate + H(+) = UMP + CO2</text>
        <dbReference type="Rhea" id="RHEA:11596"/>
        <dbReference type="ChEBI" id="CHEBI:15378"/>
        <dbReference type="ChEBI" id="CHEBI:16526"/>
        <dbReference type="ChEBI" id="CHEBI:57538"/>
        <dbReference type="ChEBI" id="CHEBI:57865"/>
        <dbReference type="EC" id="4.1.1.23"/>
    </reaction>
</comment>
<comment type="pathway">
    <text evidence="1">Pyrimidine metabolism; UMP biosynthesis via de novo pathway; UMP from orotate: step 2/2.</text>
</comment>
<comment type="subunit">
    <text evidence="1">Homodimer.</text>
</comment>
<comment type="similarity">
    <text evidence="1">Belongs to the OMP decarboxylase family. Type 1 subfamily.</text>
</comment>
<reference key="1">
    <citation type="journal article" date="2004" name="Nat. Genet.">
        <title>Evidence in the Legionella pneumophila genome for exploitation of host cell functions and high genome plasticity.</title>
        <authorList>
            <person name="Cazalet C."/>
            <person name="Rusniok C."/>
            <person name="Brueggemann H."/>
            <person name="Zidane N."/>
            <person name="Magnier A."/>
            <person name="Ma L."/>
            <person name="Tichit M."/>
            <person name="Jarraud S."/>
            <person name="Bouchier C."/>
            <person name="Vandenesch F."/>
            <person name="Kunst F."/>
            <person name="Etienne J."/>
            <person name="Glaser P."/>
            <person name="Buchrieser C."/>
        </authorList>
    </citation>
    <scope>NUCLEOTIDE SEQUENCE [LARGE SCALE GENOMIC DNA]</scope>
    <source>
        <strain>Paris</strain>
    </source>
</reference>
<dbReference type="EC" id="4.1.1.23" evidence="1"/>
<dbReference type="EMBL" id="CR628336">
    <property type="protein sequence ID" value="CAH12531.1"/>
    <property type="molecule type" value="Genomic_DNA"/>
</dbReference>
<dbReference type="RefSeq" id="WP_011213712.1">
    <property type="nucleotide sequence ID" value="NC_006368.1"/>
</dbReference>
<dbReference type="SMR" id="Q5X5E0"/>
<dbReference type="KEGG" id="lpp:lpp1380"/>
<dbReference type="LegioList" id="lpp1380"/>
<dbReference type="HOGENOM" id="CLU_067069_0_0_6"/>
<dbReference type="UniPathway" id="UPA00070">
    <property type="reaction ID" value="UER00120"/>
</dbReference>
<dbReference type="GO" id="GO:0005829">
    <property type="term" value="C:cytosol"/>
    <property type="evidence" value="ECO:0007669"/>
    <property type="project" value="TreeGrafter"/>
</dbReference>
<dbReference type="GO" id="GO:0004590">
    <property type="term" value="F:orotidine-5'-phosphate decarboxylase activity"/>
    <property type="evidence" value="ECO:0007669"/>
    <property type="project" value="UniProtKB-UniRule"/>
</dbReference>
<dbReference type="GO" id="GO:0006207">
    <property type="term" value="P:'de novo' pyrimidine nucleobase biosynthetic process"/>
    <property type="evidence" value="ECO:0007669"/>
    <property type="project" value="InterPro"/>
</dbReference>
<dbReference type="GO" id="GO:0044205">
    <property type="term" value="P:'de novo' UMP biosynthetic process"/>
    <property type="evidence" value="ECO:0007669"/>
    <property type="project" value="UniProtKB-UniRule"/>
</dbReference>
<dbReference type="CDD" id="cd04725">
    <property type="entry name" value="OMP_decarboxylase_like"/>
    <property type="match status" value="1"/>
</dbReference>
<dbReference type="FunFam" id="3.20.20.70:FF:000015">
    <property type="entry name" value="Orotidine 5'-phosphate decarboxylase"/>
    <property type="match status" value="1"/>
</dbReference>
<dbReference type="Gene3D" id="3.20.20.70">
    <property type="entry name" value="Aldolase class I"/>
    <property type="match status" value="1"/>
</dbReference>
<dbReference type="HAMAP" id="MF_01200_B">
    <property type="entry name" value="OMPdecase_type1_B"/>
    <property type="match status" value="1"/>
</dbReference>
<dbReference type="InterPro" id="IPR013785">
    <property type="entry name" value="Aldolase_TIM"/>
</dbReference>
<dbReference type="InterPro" id="IPR014732">
    <property type="entry name" value="OMPdecase"/>
</dbReference>
<dbReference type="InterPro" id="IPR018089">
    <property type="entry name" value="OMPdecase_AS"/>
</dbReference>
<dbReference type="InterPro" id="IPR047596">
    <property type="entry name" value="OMPdecase_bac"/>
</dbReference>
<dbReference type="InterPro" id="IPR001754">
    <property type="entry name" value="OMPdeCOase_dom"/>
</dbReference>
<dbReference type="InterPro" id="IPR011060">
    <property type="entry name" value="RibuloseP-bd_barrel"/>
</dbReference>
<dbReference type="NCBIfam" id="NF001273">
    <property type="entry name" value="PRK00230.1"/>
    <property type="match status" value="1"/>
</dbReference>
<dbReference type="NCBIfam" id="TIGR01740">
    <property type="entry name" value="pyrF"/>
    <property type="match status" value="1"/>
</dbReference>
<dbReference type="PANTHER" id="PTHR32119">
    <property type="entry name" value="OROTIDINE 5'-PHOSPHATE DECARBOXYLASE"/>
    <property type="match status" value="1"/>
</dbReference>
<dbReference type="PANTHER" id="PTHR32119:SF2">
    <property type="entry name" value="OROTIDINE 5'-PHOSPHATE DECARBOXYLASE"/>
    <property type="match status" value="1"/>
</dbReference>
<dbReference type="Pfam" id="PF00215">
    <property type="entry name" value="OMPdecase"/>
    <property type="match status" value="1"/>
</dbReference>
<dbReference type="SMART" id="SM00934">
    <property type="entry name" value="OMPdecase"/>
    <property type="match status" value="1"/>
</dbReference>
<dbReference type="SUPFAM" id="SSF51366">
    <property type="entry name" value="Ribulose-phoshate binding barrel"/>
    <property type="match status" value="1"/>
</dbReference>
<dbReference type="PROSITE" id="PS00156">
    <property type="entry name" value="OMPDECASE"/>
    <property type="match status" value="1"/>
</dbReference>